<gene>
    <name type="primary">PRP28</name>
    <name type="ordered locus">YALI0F28391g</name>
</gene>
<keyword id="KW-0067">ATP-binding</keyword>
<keyword id="KW-0963">Cytoplasm</keyword>
<keyword id="KW-0347">Helicase</keyword>
<keyword id="KW-0378">Hydrolase</keyword>
<keyword id="KW-0507">mRNA processing</keyword>
<keyword id="KW-0508">mRNA splicing</keyword>
<keyword id="KW-0547">Nucleotide-binding</keyword>
<keyword id="KW-0539">Nucleus</keyword>
<keyword id="KW-1185">Reference proteome</keyword>
<comment type="function">
    <text evidence="1">ATP-dependent RNA helicase involved in mRNA splicing. May destabilize the U1/5'-splice site duplex to permit an effective competition for the 5'-splice site by the U6 snRNA, resulting in the switch between U1 and U6 at the 5'-splice site. May also act to unwind the U4/U6 base-pairing interaction in the U4/U6/U5 snRNP, facilitating the first covalent step of splicing (By similarity).</text>
</comment>
<comment type="catalytic activity">
    <reaction>
        <text>ATP + H2O = ADP + phosphate + H(+)</text>
        <dbReference type="Rhea" id="RHEA:13065"/>
        <dbReference type="ChEBI" id="CHEBI:15377"/>
        <dbReference type="ChEBI" id="CHEBI:15378"/>
        <dbReference type="ChEBI" id="CHEBI:30616"/>
        <dbReference type="ChEBI" id="CHEBI:43474"/>
        <dbReference type="ChEBI" id="CHEBI:456216"/>
        <dbReference type="EC" id="3.6.4.13"/>
    </reaction>
</comment>
<comment type="subunit">
    <text evidence="1">Component of the U5 snRNP complex.</text>
</comment>
<comment type="subcellular location">
    <subcellularLocation>
        <location evidence="1">Cytoplasm</location>
    </subcellularLocation>
    <subcellularLocation>
        <location evidence="1">Nucleus</location>
    </subcellularLocation>
</comment>
<comment type="domain">
    <text>The Q motif is unique to and characteristic of the DEAD box family of RNA helicases and controls ATP binding and hydrolysis.</text>
</comment>
<comment type="similarity">
    <text evidence="5">Belongs to the DEAD box helicase family. DDX23/PRP28 subfamily.</text>
</comment>
<reference key="1">
    <citation type="journal article" date="2004" name="Nature">
        <title>Genome evolution in yeasts.</title>
        <authorList>
            <person name="Dujon B."/>
            <person name="Sherman D."/>
            <person name="Fischer G."/>
            <person name="Durrens P."/>
            <person name="Casaregola S."/>
            <person name="Lafontaine I."/>
            <person name="de Montigny J."/>
            <person name="Marck C."/>
            <person name="Neuveglise C."/>
            <person name="Talla E."/>
            <person name="Goffard N."/>
            <person name="Frangeul L."/>
            <person name="Aigle M."/>
            <person name="Anthouard V."/>
            <person name="Babour A."/>
            <person name="Barbe V."/>
            <person name="Barnay S."/>
            <person name="Blanchin S."/>
            <person name="Beckerich J.-M."/>
            <person name="Beyne E."/>
            <person name="Bleykasten C."/>
            <person name="Boisrame A."/>
            <person name="Boyer J."/>
            <person name="Cattolico L."/>
            <person name="Confanioleri F."/>
            <person name="de Daruvar A."/>
            <person name="Despons L."/>
            <person name="Fabre E."/>
            <person name="Fairhead C."/>
            <person name="Ferry-Dumazet H."/>
            <person name="Groppi A."/>
            <person name="Hantraye F."/>
            <person name="Hennequin C."/>
            <person name="Jauniaux N."/>
            <person name="Joyet P."/>
            <person name="Kachouri R."/>
            <person name="Kerrest A."/>
            <person name="Koszul R."/>
            <person name="Lemaire M."/>
            <person name="Lesur I."/>
            <person name="Ma L."/>
            <person name="Muller H."/>
            <person name="Nicaud J.-M."/>
            <person name="Nikolski M."/>
            <person name="Oztas S."/>
            <person name="Ozier-Kalogeropoulos O."/>
            <person name="Pellenz S."/>
            <person name="Potier S."/>
            <person name="Richard G.-F."/>
            <person name="Straub M.-L."/>
            <person name="Suleau A."/>
            <person name="Swennen D."/>
            <person name="Tekaia F."/>
            <person name="Wesolowski-Louvel M."/>
            <person name="Westhof E."/>
            <person name="Wirth B."/>
            <person name="Zeniou-Meyer M."/>
            <person name="Zivanovic Y."/>
            <person name="Bolotin-Fukuhara M."/>
            <person name="Thierry A."/>
            <person name="Bouchier C."/>
            <person name="Caudron B."/>
            <person name="Scarpelli C."/>
            <person name="Gaillardin C."/>
            <person name="Weissenbach J."/>
            <person name="Wincker P."/>
            <person name="Souciet J.-L."/>
        </authorList>
    </citation>
    <scope>NUCLEOTIDE SEQUENCE [LARGE SCALE GENOMIC DNA]</scope>
    <source>
        <strain>CLIB 122 / E 150</strain>
    </source>
</reference>
<name>PRP28_YARLI</name>
<evidence type="ECO:0000250" key="1"/>
<evidence type="ECO:0000255" key="2">
    <source>
        <dbReference type="PROSITE-ProRule" id="PRU00541"/>
    </source>
</evidence>
<evidence type="ECO:0000255" key="3">
    <source>
        <dbReference type="PROSITE-ProRule" id="PRU00542"/>
    </source>
</evidence>
<evidence type="ECO:0000256" key="4">
    <source>
        <dbReference type="SAM" id="MobiDB-lite"/>
    </source>
</evidence>
<evidence type="ECO:0000305" key="5"/>
<proteinExistence type="inferred from homology"/>
<accession>Q6C024</accession>
<dbReference type="EC" id="3.6.4.13"/>
<dbReference type="EMBL" id="CR382132">
    <property type="protein sequence ID" value="CAG78800.1"/>
    <property type="molecule type" value="Genomic_DNA"/>
</dbReference>
<dbReference type="RefSeq" id="XP_505988.1">
    <property type="nucleotide sequence ID" value="XM_505988.1"/>
</dbReference>
<dbReference type="SMR" id="Q6C024"/>
<dbReference type="FunCoup" id="Q6C024">
    <property type="interactions" value="935"/>
</dbReference>
<dbReference type="STRING" id="284591.Q6C024"/>
<dbReference type="EnsemblFungi" id="CAG78800">
    <property type="protein sequence ID" value="CAG78800"/>
    <property type="gene ID" value="YALI0_F28391g"/>
</dbReference>
<dbReference type="KEGG" id="yli:2908856"/>
<dbReference type="VEuPathDB" id="FungiDB:YALI0_F28391g"/>
<dbReference type="HOGENOM" id="CLU_003041_11_4_1"/>
<dbReference type="InParanoid" id="Q6C024"/>
<dbReference type="OMA" id="IFINYKR"/>
<dbReference type="OrthoDB" id="115699at4891"/>
<dbReference type="Proteomes" id="UP000001300">
    <property type="component" value="Chromosome F"/>
</dbReference>
<dbReference type="GO" id="GO:0071013">
    <property type="term" value="C:catalytic step 2 spliceosome"/>
    <property type="evidence" value="ECO:0000318"/>
    <property type="project" value="GO_Central"/>
</dbReference>
<dbReference type="GO" id="GO:0005737">
    <property type="term" value="C:cytoplasm"/>
    <property type="evidence" value="ECO:0007669"/>
    <property type="project" value="UniProtKB-SubCell"/>
</dbReference>
<dbReference type="GO" id="GO:0005524">
    <property type="term" value="F:ATP binding"/>
    <property type="evidence" value="ECO:0007669"/>
    <property type="project" value="UniProtKB-KW"/>
</dbReference>
<dbReference type="GO" id="GO:0016887">
    <property type="term" value="F:ATP hydrolysis activity"/>
    <property type="evidence" value="ECO:0007669"/>
    <property type="project" value="RHEA"/>
</dbReference>
<dbReference type="GO" id="GO:0003729">
    <property type="term" value="F:mRNA binding"/>
    <property type="evidence" value="ECO:0000318"/>
    <property type="project" value="GO_Central"/>
</dbReference>
<dbReference type="GO" id="GO:0003724">
    <property type="term" value="F:RNA helicase activity"/>
    <property type="evidence" value="ECO:0007669"/>
    <property type="project" value="UniProtKB-EC"/>
</dbReference>
<dbReference type="GO" id="GO:0000398">
    <property type="term" value="P:mRNA splicing, via spliceosome"/>
    <property type="evidence" value="ECO:0000318"/>
    <property type="project" value="GO_Central"/>
</dbReference>
<dbReference type="CDD" id="cd17945">
    <property type="entry name" value="DEADc_DDX23"/>
    <property type="match status" value="1"/>
</dbReference>
<dbReference type="CDD" id="cd18787">
    <property type="entry name" value="SF2_C_DEAD"/>
    <property type="match status" value="1"/>
</dbReference>
<dbReference type="Gene3D" id="3.40.50.300">
    <property type="entry name" value="P-loop containing nucleotide triphosphate hydrolases"/>
    <property type="match status" value="2"/>
</dbReference>
<dbReference type="InterPro" id="IPR011545">
    <property type="entry name" value="DEAD/DEAH_box_helicase_dom"/>
</dbReference>
<dbReference type="InterPro" id="IPR014001">
    <property type="entry name" value="Helicase_ATP-bd"/>
</dbReference>
<dbReference type="InterPro" id="IPR001650">
    <property type="entry name" value="Helicase_C-like"/>
</dbReference>
<dbReference type="InterPro" id="IPR027417">
    <property type="entry name" value="P-loop_NTPase"/>
</dbReference>
<dbReference type="InterPro" id="IPR000629">
    <property type="entry name" value="RNA-helicase_DEAD-box_CS"/>
</dbReference>
<dbReference type="PANTHER" id="PTHR47958">
    <property type="entry name" value="ATP-DEPENDENT RNA HELICASE DBP3"/>
    <property type="match status" value="1"/>
</dbReference>
<dbReference type="Pfam" id="PF00270">
    <property type="entry name" value="DEAD"/>
    <property type="match status" value="1"/>
</dbReference>
<dbReference type="Pfam" id="PF00271">
    <property type="entry name" value="Helicase_C"/>
    <property type="match status" value="1"/>
</dbReference>
<dbReference type="SMART" id="SM00487">
    <property type="entry name" value="DEXDc"/>
    <property type="match status" value="1"/>
</dbReference>
<dbReference type="SMART" id="SM00490">
    <property type="entry name" value="HELICc"/>
    <property type="match status" value="1"/>
</dbReference>
<dbReference type="SUPFAM" id="SSF52540">
    <property type="entry name" value="P-loop containing nucleoside triphosphate hydrolases"/>
    <property type="match status" value="1"/>
</dbReference>
<dbReference type="PROSITE" id="PS00039">
    <property type="entry name" value="DEAD_ATP_HELICASE"/>
    <property type="match status" value="1"/>
</dbReference>
<dbReference type="PROSITE" id="PS51192">
    <property type="entry name" value="HELICASE_ATP_BIND_1"/>
    <property type="match status" value="1"/>
</dbReference>
<dbReference type="PROSITE" id="PS51194">
    <property type="entry name" value="HELICASE_CTER"/>
    <property type="match status" value="1"/>
</dbReference>
<dbReference type="PROSITE" id="PS51195">
    <property type="entry name" value="Q_MOTIF"/>
    <property type="match status" value="1"/>
</dbReference>
<protein>
    <recommendedName>
        <fullName>Pre-mRNA-splicing ATP-dependent RNA helicase PRP28</fullName>
        <ecNumber>3.6.4.13</ecNumber>
    </recommendedName>
</protein>
<feature type="chain" id="PRO_0000232378" description="Pre-mRNA-splicing ATP-dependent RNA helicase PRP28">
    <location>
        <begin position="1"/>
        <end position="575"/>
    </location>
</feature>
<feature type="domain" description="Helicase ATP-binding" evidence="2">
    <location>
        <begin position="194"/>
        <end position="392"/>
    </location>
</feature>
<feature type="domain" description="Helicase C-terminal" evidence="3">
    <location>
        <begin position="403"/>
        <end position="565"/>
    </location>
</feature>
<feature type="region of interest" description="Disordered" evidence="4">
    <location>
        <begin position="35"/>
        <end position="130"/>
    </location>
</feature>
<feature type="region of interest" description="Disordered" evidence="4">
    <location>
        <begin position="552"/>
        <end position="575"/>
    </location>
</feature>
<feature type="short sequence motif" description="Q motif">
    <location>
        <begin position="163"/>
        <end position="191"/>
    </location>
</feature>
<feature type="short sequence motif" description="DEAD box">
    <location>
        <begin position="320"/>
        <end position="323"/>
    </location>
</feature>
<feature type="compositionally biased region" description="Basic and acidic residues" evidence="4">
    <location>
        <begin position="48"/>
        <end position="63"/>
    </location>
</feature>
<feature type="compositionally biased region" description="Basic and acidic residues" evidence="4">
    <location>
        <begin position="120"/>
        <end position="130"/>
    </location>
</feature>
<feature type="compositionally biased region" description="Polar residues" evidence="4">
    <location>
        <begin position="552"/>
        <end position="561"/>
    </location>
</feature>
<feature type="compositionally biased region" description="Basic residues" evidence="4">
    <location>
        <begin position="566"/>
        <end position="575"/>
    </location>
</feature>
<feature type="binding site" evidence="2">
    <location>
        <begin position="207"/>
        <end position="214"/>
    </location>
    <ligand>
        <name>ATP</name>
        <dbReference type="ChEBI" id="CHEBI:30616"/>
    </ligand>
</feature>
<sequence length="575" mass="63750">MPVSIEELKALQVQKKEASKPKFISKAKRAEMAAKAKQIQKNTTSEETTLKDIRSTTDLKRSVVQETVETTKPLPSKPKPKSTSGKFSFDWSAADDTSKAYQPSYSIDSGDGQVPKRQKRDLEDAHWSDKPVESMTSRDWRIFKEDYSIVTKGGGNIPNPLRSWNECKEIPGIVRDTISRMGYKEPTPIQRAAIPIALGIRDVIGVAETGSGKTASFLIPLISYICELPKLDERSKVNGPYGLILAPTRELAMQIKDEAVKFCAPLGFKVVSVVGGYSAQEQALAVQEGAELIVATPGRLLDVIDRRLLVLNQCCYVVMDEADRMVDMGFEEQVQKVLASLPSSNAKPDSDEAENLAAVSTRRYRQTMMYTATMPVAIEKLAKKYLRRPGIVTIGSAGQAGSTVTQLVEFLNTDEKRKRRLLDIISKRQYRPPIVVFLNYKRDCEAVSDALVAAGWRTAIIHGGKQQEQREQAVQHLKRGAVDVLVATDVAGRGLDIPNVSLVVNFQMANNIESYTHRIGRTGRAGKRGTAVTFLGQEDDDVLFELKQMISRSEASPNNQELSRHPAARMKKLQQ</sequence>
<organism>
    <name type="scientific">Yarrowia lipolytica (strain CLIB 122 / E 150)</name>
    <name type="common">Yeast</name>
    <name type="synonym">Candida lipolytica</name>
    <dbReference type="NCBI Taxonomy" id="284591"/>
    <lineage>
        <taxon>Eukaryota</taxon>
        <taxon>Fungi</taxon>
        <taxon>Dikarya</taxon>
        <taxon>Ascomycota</taxon>
        <taxon>Saccharomycotina</taxon>
        <taxon>Dipodascomycetes</taxon>
        <taxon>Dipodascales</taxon>
        <taxon>Dipodascales incertae sedis</taxon>
        <taxon>Yarrowia</taxon>
    </lineage>
</organism>